<dbReference type="EC" id="1.1.1.37" evidence="1"/>
<dbReference type="EMBL" id="CP001164">
    <property type="protein sequence ID" value="ACI38419.1"/>
    <property type="molecule type" value="Genomic_DNA"/>
</dbReference>
<dbReference type="RefSeq" id="WP_001295272.1">
    <property type="nucleotide sequence ID" value="NC_011353.1"/>
</dbReference>
<dbReference type="SMR" id="B5YSW2"/>
<dbReference type="GeneID" id="93778749"/>
<dbReference type="KEGG" id="ecf:ECH74115_4553"/>
<dbReference type="HOGENOM" id="CLU_047181_0_1_6"/>
<dbReference type="GO" id="GO:0005737">
    <property type="term" value="C:cytoplasm"/>
    <property type="evidence" value="ECO:0007669"/>
    <property type="project" value="TreeGrafter"/>
</dbReference>
<dbReference type="GO" id="GO:0030060">
    <property type="term" value="F:L-malate dehydrogenase (NAD+) activity"/>
    <property type="evidence" value="ECO:0007669"/>
    <property type="project" value="UniProtKB-UniRule"/>
</dbReference>
<dbReference type="GO" id="GO:0006108">
    <property type="term" value="P:malate metabolic process"/>
    <property type="evidence" value="ECO:0007669"/>
    <property type="project" value="InterPro"/>
</dbReference>
<dbReference type="GO" id="GO:0006099">
    <property type="term" value="P:tricarboxylic acid cycle"/>
    <property type="evidence" value="ECO:0007669"/>
    <property type="project" value="UniProtKB-UniRule"/>
</dbReference>
<dbReference type="CDD" id="cd01337">
    <property type="entry name" value="MDH_glyoxysomal_mitochondrial"/>
    <property type="match status" value="1"/>
</dbReference>
<dbReference type="FunFam" id="3.40.50.720:FF:000017">
    <property type="entry name" value="Malate dehydrogenase"/>
    <property type="match status" value="1"/>
</dbReference>
<dbReference type="FunFam" id="3.90.110.10:FF:000001">
    <property type="entry name" value="Malate dehydrogenase"/>
    <property type="match status" value="1"/>
</dbReference>
<dbReference type="Gene3D" id="3.90.110.10">
    <property type="entry name" value="Lactate dehydrogenase/glycoside hydrolase, family 4, C-terminal"/>
    <property type="match status" value="1"/>
</dbReference>
<dbReference type="Gene3D" id="3.40.50.720">
    <property type="entry name" value="NAD(P)-binding Rossmann-like Domain"/>
    <property type="match status" value="1"/>
</dbReference>
<dbReference type="HAMAP" id="MF_01516">
    <property type="entry name" value="Malate_dehydrog_1"/>
    <property type="match status" value="1"/>
</dbReference>
<dbReference type="InterPro" id="IPR001557">
    <property type="entry name" value="L-lactate/malate_DH"/>
</dbReference>
<dbReference type="InterPro" id="IPR022383">
    <property type="entry name" value="Lactate/malate_DH_C"/>
</dbReference>
<dbReference type="InterPro" id="IPR001236">
    <property type="entry name" value="Lactate/malate_DH_N"/>
</dbReference>
<dbReference type="InterPro" id="IPR015955">
    <property type="entry name" value="Lactate_DH/Glyco_Ohase_4_C"/>
</dbReference>
<dbReference type="InterPro" id="IPR001252">
    <property type="entry name" value="Malate_DH_AS"/>
</dbReference>
<dbReference type="InterPro" id="IPR010097">
    <property type="entry name" value="Malate_DH_type1"/>
</dbReference>
<dbReference type="InterPro" id="IPR023958">
    <property type="entry name" value="Malate_DH_type1_bac"/>
</dbReference>
<dbReference type="InterPro" id="IPR036291">
    <property type="entry name" value="NAD(P)-bd_dom_sf"/>
</dbReference>
<dbReference type="NCBIfam" id="TIGR01772">
    <property type="entry name" value="MDH_euk_gproteo"/>
    <property type="match status" value="1"/>
</dbReference>
<dbReference type="PANTHER" id="PTHR11540">
    <property type="entry name" value="MALATE AND LACTATE DEHYDROGENASE"/>
    <property type="match status" value="1"/>
</dbReference>
<dbReference type="PANTHER" id="PTHR11540:SF16">
    <property type="entry name" value="MALATE DEHYDROGENASE, MITOCHONDRIAL"/>
    <property type="match status" value="1"/>
</dbReference>
<dbReference type="Pfam" id="PF02866">
    <property type="entry name" value="Ldh_1_C"/>
    <property type="match status" value="1"/>
</dbReference>
<dbReference type="Pfam" id="PF00056">
    <property type="entry name" value="Ldh_1_N"/>
    <property type="match status" value="1"/>
</dbReference>
<dbReference type="PIRSF" id="PIRSF000102">
    <property type="entry name" value="Lac_mal_DH"/>
    <property type="match status" value="1"/>
</dbReference>
<dbReference type="SUPFAM" id="SSF56327">
    <property type="entry name" value="LDH C-terminal domain-like"/>
    <property type="match status" value="1"/>
</dbReference>
<dbReference type="SUPFAM" id="SSF51735">
    <property type="entry name" value="NAD(P)-binding Rossmann-fold domains"/>
    <property type="match status" value="1"/>
</dbReference>
<dbReference type="PROSITE" id="PS00068">
    <property type="entry name" value="MDH"/>
    <property type="match status" value="1"/>
</dbReference>
<proteinExistence type="inferred from homology"/>
<feature type="chain" id="PRO_1000146170" description="Malate dehydrogenase">
    <location>
        <begin position="1"/>
        <end position="312"/>
    </location>
</feature>
<feature type="active site" description="Proton acceptor" evidence="1">
    <location>
        <position position="177"/>
    </location>
</feature>
<feature type="binding site" evidence="1">
    <location>
        <begin position="7"/>
        <end position="13"/>
    </location>
    <ligand>
        <name>NAD(+)</name>
        <dbReference type="ChEBI" id="CHEBI:57540"/>
    </ligand>
</feature>
<feature type="binding site" evidence="1">
    <location>
        <position position="34"/>
    </location>
    <ligand>
        <name>NAD(+)</name>
        <dbReference type="ChEBI" id="CHEBI:57540"/>
    </ligand>
</feature>
<feature type="binding site" evidence="1">
    <location>
        <position position="81"/>
    </location>
    <ligand>
        <name>substrate</name>
    </ligand>
</feature>
<feature type="binding site" evidence="1">
    <location>
        <position position="87"/>
    </location>
    <ligand>
        <name>substrate</name>
    </ligand>
</feature>
<feature type="binding site" evidence="1">
    <location>
        <position position="94"/>
    </location>
    <ligand>
        <name>NAD(+)</name>
        <dbReference type="ChEBI" id="CHEBI:57540"/>
    </ligand>
</feature>
<feature type="binding site" evidence="1">
    <location>
        <begin position="117"/>
        <end position="119"/>
    </location>
    <ligand>
        <name>NAD(+)</name>
        <dbReference type="ChEBI" id="CHEBI:57540"/>
    </ligand>
</feature>
<feature type="binding site" evidence="1">
    <location>
        <position position="119"/>
    </location>
    <ligand>
        <name>substrate</name>
    </ligand>
</feature>
<feature type="binding site" evidence="1">
    <location>
        <position position="153"/>
    </location>
    <ligand>
        <name>substrate</name>
    </ligand>
</feature>
<feature type="binding site" evidence="1">
    <location>
        <position position="227"/>
    </location>
    <ligand>
        <name>NAD(+)</name>
        <dbReference type="ChEBI" id="CHEBI:57540"/>
    </ligand>
</feature>
<keyword id="KW-0520">NAD</keyword>
<keyword id="KW-0560">Oxidoreductase</keyword>
<keyword id="KW-0816">Tricarboxylic acid cycle</keyword>
<comment type="function">
    <text evidence="1">Catalyzes the reversible oxidation of malate to oxaloacetate.</text>
</comment>
<comment type="catalytic activity">
    <reaction evidence="1">
        <text>(S)-malate + NAD(+) = oxaloacetate + NADH + H(+)</text>
        <dbReference type="Rhea" id="RHEA:21432"/>
        <dbReference type="ChEBI" id="CHEBI:15378"/>
        <dbReference type="ChEBI" id="CHEBI:15589"/>
        <dbReference type="ChEBI" id="CHEBI:16452"/>
        <dbReference type="ChEBI" id="CHEBI:57540"/>
        <dbReference type="ChEBI" id="CHEBI:57945"/>
        <dbReference type="EC" id="1.1.1.37"/>
    </reaction>
</comment>
<comment type="subunit">
    <text evidence="1">Homodimer.</text>
</comment>
<comment type="similarity">
    <text evidence="1">Belongs to the LDH/MDH superfamily. MDH type 1 family.</text>
</comment>
<organism>
    <name type="scientific">Escherichia coli O157:H7 (strain EC4115 / EHEC)</name>
    <dbReference type="NCBI Taxonomy" id="444450"/>
    <lineage>
        <taxon>Bacteria</taxon>
        <taxon>Pseudomonadati</taxon>
        <taxon>Pseudomonadota</taxon>
        <taxon>Gammaproteobacteria</taxon>
        <taxon>Enterobacterales</taxon>
        <taxon>Enterobacteriaceae</taxon>
        <taxon>Escherichia</taxon>
    </lineage>
</organism>
<reference key="1">
    <citation type="journal article" date="2011" name="Proc. Natl. Acad. Sci. U.S.A.">
        <title>Genomic anatomy of Escherichia coli O157:H7 outbreaks.</title>
        <authorList>
            <person name="Eppinger M."/>
            <person name="Mammel M.K."/>
            <person name="Leclerc J.E."/>
            <person name="Ravel J."/>
            <person name="Cebula T.A."/>
        </authorList>
    </citation>
    <scope>NUCLEOTIDE SEQUENCE [LARGE SCALE GENOMIC DNA]</scope>
    <source>
        <strain>EC4115 / EHEC</strain>
    </source>
</reference>
<sequence length="312" mass="32337">MKVAVLGAAGGIGQALALLLKTQLPSGSELSLYDIAPVTPGVAVDLSHIPTAVKIKGFSGEDATPALEGADVVLISAGVARKPGMDRSDLFNVNAGIVKNLVQQVAKTCPKACIGIITNPVNTTVAIAAEVLKKAGVYDKNKLFGVTTLDIIRSNTFVAELKGKQPGEVEVPVIGGHSGVTILPLLSQVPGVSFTEQEVADLTKRIQNAGTEVVEAKAGGGSATLSMGQAAARFGLSLVRALQGEQGVVECAYVEGDGQYARFFSQPLLLGKNGVEERKSIGTLSAFEQNALEGMLDTLKKDIALGEEFVNK</sequence>
<accession>B5YSW2</accession>
<protein>
    <recommendedName>
        <fullName evidence="1">Malate dehydrogenase</fullName>
        <ecNumber evidence="1">1.1.1.37</ecNumber>
    </recommendedName>
</protein>
<gene>
    <name evidence="1" type="primary">mdh</name>
    <name type="ordered locus">ECH74115_4553</name>
</gene>
<evidence type="ECO:0000255" key="1">
    <source>
        <dbReference type="HAMAP-Rule" id="MF_01516"/>
    </source>
</evidence>
<name>MDH_ECO5E</name>